<accession>Q8U3P6</accession>
<keyword id="KW-1003">Cell membrane</keyword>
<keyword id="KW-0328">Glycosyltransferase</keyword>
<keyword id="KW-0460">Magnesium</keyword>
<keyword id="KW-0464">Manganese</keyword>
<keyword id="KW-0472">Membrane</keyword>
<keyword id="KW-0479">Metal-binding</keyword>
<keyword id="KW-1185">Reference proteome</keyword>
<keyword id="KW-0808">Transferase</keyword>
<keyword id="KW-0812">Transmembrane</keyword>
<keyword id="KW-1133">Transmembrane helix</keyword>
<sequence length="743" mass="84342">MKIDKRLMVIVAIATLFRMIPFRLKYLVGSDPYFHLAYIEEALKAGEWFNFFTYAGGPWGLQVRLFHPLGLWATPAYIYKLFSFLGISLYTAFRVTPVIFGVLTVVFFYLSLKKLYNRDVAFIVGLFLGVNYGHIFRSMANYYRGDNYMLFWYSVALLGIALGLKTRSKYRYLFYLLPGIATGFASAFWQAYYPIFVFVLAGGLLLGVYAYLKSPKLFLDSILIVLSTGLGVLIANILGDKVGYGMLGYTDWMGKKVAETFGLEFGFIKDAYLLIHVKYLLPLSLVFLGFLIITKKLNPKIKVGVLVGGSILAFIVMLVKFPALKDLSTGFGTFREVPISETLPPTLDDLWRAYNIAIFLAALYILRLRKIRSGDAILLGYVITSLWMLRYWTRFLFTAAPAVAFLSGIGVYELTRRIKENKIRITSLGVVILLSSAFSLGEVYSVKPFMNENWEKALIFIRENSNENDIVLTWWDWGHFVTYYARRSPVAQGSPNSGVAGYYLGLVDNGWAQSLGVDYVIVSLYDILKFEAIVDTAKLSRKWENISRADYGVDFLKLTESTGSILRFDSQYSTLIVKEGNIRVILSGKVVYPREAIIESNGRIKNLKYPARSGVYVYVNLDYGYAILANEKAWETNLLRLFTQRTGENYELVYSDGGFVKVFRFVHPNVVFRGNKFILTGNGTGLGLYGYLDNGTLVFKKWYSVKNMQEFELPNNLNGSVVVRYVYTQGKIVLDRGIVRVKN</sequence>
<reference key="1">
    <citation type="journal article" date="1999" name="Genetics">
        <title>Divergence of the hyperthermophilic archaea Pyrococcus furiosus and P. horikoshii inferred from complete genomic sequences.</title>
        <authorList>
            <person name="Maeder D.L."/>
            <person name="Weiss R.B."/>
            <person name="Dunn D.M."/>
            <person name="Cherry J.L."/>
            <person name="Gonzalez J.M."/>
            <person name="DiRuggiero J."/>
            <person name="Robb F.T."/>
        </authorList>
    </citation>
    <scope>NUCLEOTIDE SEQUENCE [LARGE SCALE GENOMIC DNA]</scope>
    <source>
        <strain>ATCC 43587 / DSM 3638 / JCM 8422 / Vc1</strain>
    </source>
</reference>
<reference key="2">
    <citation type="journal article" date="2016" name="J. Biol. Chem.">
        <title>Comparative analysis of archaeal lipid-linked oligosaccharides that serve as oligosaccharide donors for Asn glycosylation.</title>
        <authorList>
            <person name="Taguchi Y."/>
            <person name="Fujinami D."/>
            <person name="Kohda D."/>
        </authorList>
    </citation>
    <scope>COMPOSITION OF LIPID-LINKED OLIGOSACCHARIDE</scope>
</reference>
<feature type="chain" id="PRO_0000445591" description="Dolichyl-phosphooligosaccharide-protein glycotransferase 2">
    <location>
        <begin position="1"/>
        <end position="743"/>
    </location>
</feature>
<feature type="topological domain" description="Cytoplasmic" evidence="6">
    <location>
        <begin position="1"/>
        <end position="7"/>
    </location>
</feature>
<feature type="transmembrane region" description="Helical" evidence="5">
    <location>
        <begin position="8"/>
        <end position="28"/>
    </location>
</feature>
<feature type="topological domain" description="Extracellular" evidence="6">
    <location>
        <begin position="29"/>
        <end position="91"/>
    </location>
</feature>
<feature type="transmembrane region" description="Helical" evidence="5">
    <location>
        <begin position="92"/>
        <end position="112"/>
    </location>
</feature>
<feature type="topological domain" description="Cytoplasmic" evidence="6">
    <location>
        <begin position="113"/>
        <end position="119"/>
    </location>
</feature>
<feature type="transmembrane region" description="Helical" evidence="5">
    <location>
        <begin position="120"/>
        <end position="140"/>
    </location>
</feature>
<feature type="topological domain" description="Extracellular" evidence="6">
    <location>
        <begin position="141"/>
        <end position="144"/>
    </location>
</feature>
<feature type="transmembrane region" description="Helical" evidence="5">
    <location>
        <begin position="145"/>
        <end position="165"/>
    </location>
</feature>
<feature type="topological domain" description="Cytoplasmic" evidence="6">
    <location>
        <begin position="166"/>
        <end position="170"/>
    </location>
</feature>
<feature type="transmembrane region" description="Helical" evidence="5">
    <location>
        <begin position="171"/>
        <end position="191"/>
    </location>
</feature>
<feature type="transmembrane region" description="Helical" evidence="5">
    <location>
        <begin position="192"/>
        <end position="212"/>
    </location>
</feature>
<feature type="topological domain" description="Cytoplasmic" evidence="6">
    <location>
        <begin position="213"/>
        <end position="216"/>
    </location>
</feature>
<feature type="transmembrane region" description="Helical" evidence="5">
    <location>
        <begin position="217"/>
        <end position="237"/>
    </location>
</feature>
<feature type="topological domain" description="Extracellular" evidence="6">
    <location>
        <begin position="238"/>
        <end position="272"/>
    </location>
</feature>
<feature type="transmembrane region" description="Helical" evidence="5">
    <location>
        <begin position="273"/>
        <end position="293"/>
    </location>
</feature>
<feature type="topological domain" description="Cytoplasmic" evidence="6">
    <location>
        <begin position="294"/>
        <end position="302"/>
    </location>
</feature>
<feature type="transmembrane region" description="Helical" evidence="5">
    <location>
        <begin position="303"/>
        <end position="323"/>
    </location>
</feature>
<feature type="topological domain" description="Extracellular" evidence="6">
    <location>
        <begin position="324"/>
        <end position="345"/>
    </location>
</feature>
<feature type="transmembrane region" description="Helical" evidence="5">
    <location>
        <begin position="346"/>
        <end position="366"/>
    </location>
</feature>
<feature type="topological domain" description="Cytoplasmic" evidence="6">
    <location>
        <begin position="367"/>
        <end position="373"/>
    </location>
</feature>
<feature type="transmembrane region" description="Helical" evidence="5">
    <location>
        <begin position="374"/>
        <end position="391"/>
    </location>
</feature>
<feature type="topological domain" description="Extracellular" evidence="6">
    <location>
        <begin position="392"/>
        <end position="394"/>
    </location>
</feature>
<feature type="transmembrane region" description="Helical" evidence="5">
    <location>
        <begin position="395"/>
        <end position="415"/>
    </location>
</feature>
<feature type="topological domain" description="Cytoplasmic" evidence="6">
    <location>
        <begin position="416"/>
        <end position="424"/>
    </location>
</feature>
<feature type="transmembrane region" description="Helical" evidence="5">
    <location>
        <begin position="425"/>
        <end position="445"/>
    </location>
</feature>
<feature type="topological domain" description="Extracellular" evidence="6">
    <location>
        <begin position="446"/>
        <end position="743"/>
    </location>
</feature>
<feature type="region of interest" description="Interacts with target acceptor peptide in protein substrate" evidence="2">
    <location>
        <begin position="474"/>
        <end position="476"/>
    </location>
</feature>
<feature type="short sequence motif" description="DXD motif 1" evidence="2">
    <location>
        <begin position="29"/>
        <end position="31"/>
    </location>
</feature>
<feature type="short sequence motif" description="DXD motif 2" evidence="2">
    <location>
        <begin position="144"/>
        <end position="146"/>
    </location>
</feature>
<feature type="short sequence motif" description="TIXE motif" evidence="2">
    <location>
        <begin position="333"/>
        <end position="336"/>
    </location>
</feature>
<feature type="short sequence motif" description="WWDYG motif" evidence="4">
    <location>
        <begin position="474"/>
        <end position="478"/>
    </location>
</feature>
<feature type="short sequence motif" description="DK motif" evidence="4">
    <location>
        <begin position="526"/>
        <end position="533"/>
    </location>
</feature>
<feature type="binding site" evidence="2">
    <location>
        <position position="31"/>
    </location>
    <ligand>
        <name>Mn(2+)</name>
        <dbReference type="ChEBI" id="CHEBI:29035"/>
    </ligand>
</feature>
<feature type="binding site" evidence="2">
    <location>
        <position position="144"/>
    </location>
    <ligand>
        <name>Mn(2+)</name>
        <dbReference type="ChEBI" id="CHEBI:29035"/>
    </ligand>
</feature>
<feature type="binding site" evidence="2">
    <location>
        <position position="146"/>
    </location>
    <ligand>
        <name>Mn(2+)</name>
        <dbReference type="ChEBI" id="CHEBI:29035"/>
    </ligand>
</feature>
<feature type="binding site" evidence="2">
    <location>
        <position position="394"/>
    </location>
    <ligand>
        <name>a glycophospholipid</name>
        <dbReference type="ChEBI" id="CHEBI:24397"/>
        <note>archaeal dolichyl phosphooligosaccharide</note>
    </ligand>
</feature>
<feature type="site" description="Interacts with target acceptor peptide in protein substrate" evidence="2">
    <location>
        <position position="31"/>
    </location>
</feature>
<feature type="site" description="Important for catalytic activity" evidence="1">
    <location>
        <position position="137"/>
    </location>
</feature>
<feature type="site" description="Interacts with target acceptor peptide in protein substrate" evidence="2">
    <location>
        <position position="336"/>
    </location>
</feature>
<feature type="site" description="Interacts with target acceptor peptide in protein substrate" evidence="2">
    <location>
        <position position="529"/>
    </location>
</feature>
<name>AGLB2_PYRFU</name>
<proteinExistence type="inferred from homology"/>
<organism>
    <name type="scientific">Pyrococcus furiosus (strain ATCC 43587 / DSM 3638 / JCM 8422 / Vc1)</name>
    <dbReference type="NCBI Taxonomy" id="186497"/>
    <lineage>
        <taxon>Archaea</taxon>
        <taxon>Methanobacteriati</taxon>
        <taxon>Methanobacteriota</taxon>
        <taxon>Thermococci</taxon>
        <taxon>Thermococcales</taxon>
        <taxon>Thermococcaceae</taxon>
        <taxon>Pyrococcus</taxon>
    </lineage>
</organism>
<comment type="function">
    <text evidence="4">Oligosaccharyl transferase (OST) that catalyzes the initial transfer of a defined glycan (ManNAcXyl(2)GlcAMan(2)GalNAc in P.furiosus) from the lipid carrier dolichol-monophosphate to an asparagine residue within an Asn-X-Ser/Thr consensus motif in nascent polypeptide chains, the first step in protein N-glycosylation.</text>
</comment>
<comment type="catalytic activity">
    <reaction evidence="4">
        <text>an archaeal dolichyl phosphooligosaccharide + [protein]-L-asparagine = an archaeal dolichyl phosphate + a glycoprotein with the oligosaccharide chain attached by N-beta-D-glycosyl linkage to a protein L-asparagine.</text>
        <dbReference type="EC" id="2.4.99.21"/>
    </reaction>
</comment>
<comment type="cofactor">
    <cofactor evidence="4">
        <name>Mn(2+)</name>
        <dbReference type="ChEBI" id="CHEBI:29035"/>
    </cofactor>
    <cofactor evidence="4">
        <name>Mg(2+)</name>
        <dbReference type="ChEBI" id="CHEBI:18420"/>
    </cofactor>
</comment>
<comment type="pathway">
    <text evidence="4">Protein modification; protein glycosylation.</text>
</comment>
<comment type="subcellular location">
    <subcellularLocation>
        <location evidence="3">Cell membrane</location>
        <topology evidence="3">Multi-pass membrane protein</topology>
    </subcellularLocation>
</comment>
<comment type="domain">
    <text evidence="2">Despite low primary sequence conservation between eukaryotic catalytic subunits and bacterial and archaeal single subunit OSTs (ssOST), structural comparison revealed several common motifs at spatially equivalent positions, like the DXD motif 1 on the external loop 1 and the DXD motif 2 on the external loop 2 involved in binding of the metal ion cofactor and the carboxamide group of the acceptor asparagine, the conserved Glu residue of the TIXE/SVSE motif on the external loop 5 involved in catalysis, as well as the WWDYG and the DK/MI motifs in the globular domain that define the binding pocket for the +2 Ser/Thr of the acceptor sequon. In bacterial ssOSTs, an Arg residue was found to interact with a negatively charged side chain at the -2 position of the sequon. This Arg is conserved in bacterial enzymes and correlates with an extended sequon requirement (Asp-X-Asn-X-Ser/Thr) for bacterial N-glycosylation.</text>
</comment>
<comment type="similarity">
    <text evidence="6">Belongs to the STT3 family.</text>
</comment>
<gene>
    <name type="primary">aglB2</name>
    <name type="ordered locus">PF0411</name>
</gene>
<evidence type="ECO:0000250" key="1">
    <source>
        <dbReference type="UniProtKB" id="B9KDD4"/>
    </source>
</evidence>
<evidence type="ECO:0000250" key="2">
    <source>
        <dbReference type="UniProtKB" id="O29867"/>
    </source>
</evidence>
<evidence type="ECO:0000250" key="3">
    <source>
        <dbReference type="UniProtKB" id="Q2EMT4"/>
    </source>
</evidence>
<evidence type="ECO:0000250" key="4">
    <source>
        <dbReference type="UniProtKB" id="Q8U4D2"/>
    </source>
</evidence>
<evidence type="ECO:0000255" key="5"/>
<evidence type="ECO:0000305" key="6"/>
<dbReference type="EC" id="2.4.99.21"/>
<dbReference type="EMBL" id="AE009950">
    <property type="protein sequence ID" value="AAL80535.1"/>
    <property type="molecule type" value="Genomic_DNA"/>
</dbReference>
<dbReference type="RefSeq" id="WP_011011525.1">
    <property type="nucleotide sequence ID" value="NZ_CP023154.1"/>
</dbReference>
<dbReference type="STRING" id="186497.PF0411"/>
<dbReference type="PaxDb" id="186497-PF0411"/>
<dbReference type="KEGG" id="pfu:PF0411"/>
<dbReference type="PATRIC" id="fig|186497.12.peg.427"/>
<dbReference type="eggNOG" id="arCOG02044">
    <property type="taxonomic scope" value="Archaea"/>
</dbReference>
<dbReference type="HOGENOM" id="CLU_355503_0_0_2"/>
<dbReference type="OrthoDB" id="82393at2157"/>
<dbReference type="PhylomeDB" id="Q8U3P6"/>
<dbReference type="BRENDA" id="2.4.99.18">
    <property type="organism ID" value="5243"/>
</dbReference>
<dbReference type="UniPathway" id="UPA00378"/>
<dbReference type="Proteomes" id="UP000001013">
    <property type="component" value="Chromosome"/>
</dbReference>
<dbReference type="GO" id="GO:0005886">
    <property type="term" value="C:plasma membrane"/>
    <property type="evidence" value="ECO:0007669"/>
    <property type="project" value="UniProtKB-SubCell"/>
</dbReference>
<dbReference type="GO" id="GO:0046872">
    <property type="term" value="F:metal ion binding"/>
    <property type="evidence" value="ECO:0007669"/>
    <property type="project" value="UniProtKB-KW"/>
</dbReference>
<dbReference type="GO" id="GO:0004576">
    <property type="term" value="F:oligosaccharyl transferase activity"/>
    <property type="evidence" value="ECO:0007669"/>
    <property type="project" value="InterPro"/>
</dbReference>
<dbReference type="GO" id="GO:0006486">
    <property type="term" value="P:protein glycosylation"/>
    <property type="evidence" value="ECO:0007669"/>
    <property type="project" value="UniProtKB-UniPathway"/>
</dbReference>
<dbReference type="Gene3D" id="3.40.50.12610">
    <property type="match status" value="1"/>
</dbReference>
<dbReference type="InterPro" id="IPR003674">
    <property type="entry name" value="Oligo_trans_STT3"/>
</dbReference>
<dbReference type="InterPro" id="IPR048999">
    <property type="entry name" value="STT3-PglB_core"/>
</dbReference>
<dbReference type="PANTHER" id="PTHR13872">
    <property type="entry name" value="DOLICHYL-DIPHOSPHOOLIGOSACCHARIDE--PROTEIN GLYCOSYLTRANSFERASE SUBUNIT"/>
    <property type="match status" value="1"/>
</dbReference>
<dbReference type="PANTHER" id="PTHR13872:SF1">
    <property type="entry name" value="DOLICHYL-DIPHOSPHOOLIGOSACCHARIDE--PROTEIN GLYCOSYLTRANSFERASE SUBUNIT STT3B"/>
    <property type="match status" value="1"/>
</dbReference>
<dbReference type="Pfam" id="PF21436">
    <property type="entry name" value="STT3-PglB_core"/>
    <property type="match status" value="1"/>
</dbReference>
<protein>
    <recommendedName>
        <fullName>Dolichyl-phosphooligosaccharide-protein glycotransferase 2</fullName>
        <ecNumber>2.4.99.21</ecNumber>
    </recommendedName>
    <alternativeName>
        <fullName>Archaeal glycosylation protein B</fullName>
        <shortName>AglB-S</shortName>
        <shortName>AglB-Short</shortName>
    </alternativeName>
    <alternativeName>
        <fullName>Oligosaccharyl transferase</fullName>
        <shortName>OST</shortName>
        <shortName>OTase</shortName>
    </alternativeName>
</protein>